<reference key="1">
    <citation type="journal article" date="2007" name="J. Bacteriol.">
        <title>The complete genome sequence of the lactic acid bacterial paradigm Lactococcus lactis subsp. cremoris MG1363.</title>
        <authorList>
            <person name="Wegmann U."/>
            <person name="O'Connell-Motherway M."/>
            <person name="Zomer A."/>
            <person name="Buist G."/>
            <person name="Shearman C."/>
            <person name="Canchaya C."/>
            <person name="Ventura M."/>
            <person name="Goesmann A."/>
            <person name="Gasson M.J."/>
            <person name="Kuipers O.P."/>
            <person name="van Sinderen D."/>
            <person name="Kok J."/>
        </authorList>
    </citation>
    <scope>NUCLEOTIDE SEQUENCE [LARGE SCALE GENOMIC DNA]</scope>
    <source>
        <strain>MG1363</strain>
    </source>
</reference>
<dbReference type="EC" id="7.4.2.8" evidence="1"/>
<dbReference type="EMBL" id="AM406671">
    <property type="protein sequence ID" value="CAL96731.1"/>
    <property type="molecule type" value="Genomic_DNA"/>
</dbReference>
<dbReference type="RefSeq" id="WP_011834222.1">
    <property type="nucleotide sequence ID" value="NC_009004.1"/>
</dbReference>
<dbReference type="SMR" id="A2RHJ5"/>
<dbReference type="STRING" id="416870.llmg_0124"/>
<dbReference type="GeneID" id="61108422"/>
<dbReference type="KEGG" id="llm:llmg_0124"/>
<dbReference type="eggNOG" id="COG0653">
    <property type="taxonomic scope" value="Bacteria"/>
</dbReference>
<dbReference type="HOGENOM" id="CLU_005314_3_0_9"/>
<dbReference type="OrthoDB" id="9805579at2"/>
<dbReference type="PhylomeDB" id="A2RHJ5"/>
<dbReference type="Proteomes" id="UP000000364">
    <property type="component" value="Chromosome"/>
</dbReference>
<dbReference type="GO" id="GO:0031522">
    <property type="term" value="C:cell envelope Sec protein transport complex"/>
    <property type="evidence" value="ECO:0007669"/>
    <property type="project" value="TreeGrafter"/>
</dbReference>
<dbReference type="GO" id="GO:0005829">
    <property type="term" value="C:cytosol"/>
    <property type="evidence" value="ECO:0007669"/>
    <property type="project" value="TreeGrafter"/>
</dbReference>
<dbReference type="GO" id="GO:0005886">
    <property type="term" value="C:plasma membrane"/>
    <property type="evidence" value="ECO:0007669"/>
    <property type="project" value="UniProtKB-SubCell"/>
</dbReference>
<dbReference type="GO" id="GO:0005524">
    <property type="term" value="F:ATP binding"/>
    <property type="evidence" value="ECO:0007669"/>
    <property type="project" value="UniProtKB-UniRule"/>
</dbReference>
<dbReference type="GO" id="GO:0046872">
    <property type="term" value="F:metal ion binding"/>
    <property type="evidence" value="ECO:0007669"/>
    <property type="project" value="UniProtKB-KW"/>
</dbReference>
<dbReference type="GO" id="GO:0008564">
    <property type="term" value="F:protein-exporting ATPase activity"/>
    <property type="evidence" value="ECO:0007669"/>
    <property type="project" value="UniProtKB-EC"/>
</dbReference>
<dbReference type="GO" id="GO:0065002">
    <property type="term" value="P:intracellular protein transmembrane transport"/>
    <property type="evidence" value="ECO:0007669"/>
    <property type="project" value="UniProtKB-UniRule"/>
</dbReference>
<dbReference type="GO" id="GO:0017038">
    <property type="term" value="P:protein import"/>
    <property type="evidence" value="ECO:0007669"/>
    <property type="project" value="InterPro"/>
</dbReference>
<dbReference type="GO" id="GO:0006605">
    <property type="term" value="P:protein targeting"/>
    <property type="evidence" value="ECO:0007669"/>
    <property type="project" value="UniProtKB-UniRule"/>
</dbReference>
<dbReference type="GO" id="GO:0043952">
    <property type="term" value="P:protein transport by the Sec complex"/>
    <property type="evidence" value="ECO:0007669"/>
    <property type="project" value="TreeGrafter"/>
</dbReference>
<dbReference type="CDD" id="cd17928">
    <property type="entry name" value="DEXDc_SecA"/>
    <property type="match status" value="1"/>
</dbReference>
<dbReference type="CDD" id="cd18803">
    <property type="entry name" value="SF2_C_secA"/>
    <property type="match status" value="1"/>
</dbReference>
<dbReference type="FunFam" id="3.40.50.300:FF:000429">
    <property type="entry name" value="Preprotein translocase subunit SecA"/>
    <property type="match status" value="1"/>
</dbReference>
<dbReference type="FunFam" id="3.90.1440.10:FF:000001">
    <property type="entry name" value="Preprotein translocase subunit SecA"/>
    <property type="match status" value="1"/>
</dbReference>
<dbReference type="Gene3D" id="1.10.3060.10">
    <property type="entry name" value="Helical scaffold and wing domains of SecA"/>
    <property type="match status" value="1"/>
</dbReference>
<dbReference type="Gene3D" id="3.40.50.300">
    <property type="entry name" value="P-loop containing nucleotide triphosphate hydrolases"/>
    <property type="match status" value="3"/>
</dbReference>
<dbReference type="Gene3D" id="3.90.1440.10">
    <property type="entry name" value="SecA, preprotein cross-linking domain"/>
    <property type="match status" value="1"/>
</dbReference>
<dbReference type="HAMAP" id="MF_01382">
    <property type="entry name" value="SecA"/>
    <property type="match status" value="1"/>
</dbReference>
<dbReference type="InterPro" id="IPR014001">
    <property type="entry name" value="Helicase_ATP-bd"/>
</dbReference>
<dbReference type="InterPro" id="IPR001650">
    <property type="entry name" value="Helicase_C-like"/>
</dbReference>
<dbReference type="InterPro" id="IPR027417">
    <property type="entry name" value="P-loop_NTPase"/>
</dbReference>
<dbReference type="InterPro" id="IPR004027">
    <property type="entry name" value="SEC_C_motif"/>
</dbReference>
<dbReference type="InterPro" id="IPR000185">
    <property type="entry name" value="SecA"/>
</dbReference>
<dbReference type="InterPro" id="IPR020937">
    <property type="entry name" value="SecA_CS"/>
</dbReference>
<dbReference type="InterPro" id="IPR011115">
    <property type="entry name" value="SecA_DEAD"/>
</dbReference>
<dbReference type="InterPro" id="IPR014018">
    <property type="entry name" value="SecA_motor_DEAD"/>
</dbReference>
<dbReference type="InterPro" id="IPR011130">
    <property type="entry name" value="SecA_preprotein_X-link_dom"/>
</dbReference>
<dbReference type="InterPro" id="IPR044722">
    <property type="entry name" value="SecA_SF2_C"/>
</dbReference>
<dbReference type="InterPro" id="IPR011116">
    <property type="entry name" value="SecA_Wing/Scaffold"/>
</dbReference>
<dbReference type="InterPro" id="IPR036266">
    <property type="entry name" value="SecA_Wing/Scaffold_sf"/>
</dbReference>
<dbReference type="InterPro" id="IPR036670">
    <property type="entry name" value="SecA_X-link_sf"/>
</dbReference>
<dbReference type="NCBIfam" id="NF006630">
    <property type="entry name" value="PRK09200.1"/>
    <property type="match status" value="1"/>
</dbReference>
<dbReference type="NCBIfam" id="NF009538">
    <property type="entry name" value="PRK12904.1"/>
    <property type="match status" value="1"/>
</dbReference>
<dbReference type="NCBIfam" id="TIGR00963">
    <property type="entry name" value="secA"/>
    <property type="match status" value="1"/>
</dbReference>
<dbReference type="PANTHER" id="PTHR30612:SF0">
    <property type="entry name" value="CHLOROPLAST PROTEIN-TRANSPORTING ATPASE"/>
    <property type="match status" value="1"/>
</dbReference>
<dbReference type="PANTHER" id="PTHR30612">
    <property type="entry name" value="SECA INNER MEMBRANE COMPONENT OF SEC PROTEIN SECRETION SYSTEM"/>
    <property type="match status" value="1"/>
</dbReference>
<dbReference type="Pfam" id="PF21090">
    <property type="entry name" value="P-loop_SecA"/>
    <property type="match status" value="2"/>
</dbReference>
<dbReference type="Pfam" id="PF02810">
    <property type="entry name" value="SEC-C"/>
    <property type="match status" value="1"/>
</dbReference>
<dbReference type="Pfam" id="PF07517">
    <property type="entry name" value="SecA_DEAD"/>
    <property type="match status" value="1"/>
</dbReference>
<dbReference type="Pfam" id="PF01043">
    <property type="entry name" value="SecA_PP_bind"/>
    <property type="match status" value="1"/>
</dbReference>
<dbReference type="Pfam" id="PF07516">
    <property type="entry name" value="SecA_SW"/>
    <property type="match status" value="1"/>
</dbReference>
<dbReference type="PRINTS" id="PR00906">
    <property type="entry name" value="SECA"/>
</dbReference>
<dbReference type="SMART" id="SM00957">
    <property type="entry name" value="SecA_DEAD"/>
    <property type="match status" value="1"/>
</dbReference>
<dbReference type="SMART" id="SM00958">
    <property type="entry name" value="SecA_PP_bind"/>
    <property type="match status" value="1"/>
</dbReference>
<dbReference type="SUPFAM" id="SSF81886">
    <property type="entry name" value="Helical scaffold and wing domains of SecA"/>
    <property type="match status" value="1"/>
</dbReference>
<dbReference type="SUPFAM" id="SSF52540">
    <property type="entry name" value="P-loop containing nucleoside triphosphate hydrolases"/>
    <property type="match status" value="2"/>
</dbReference>
<dbReference type="SUPFAM" id="SSF81767">
    <property type="entry name" value="Pre-protein crosslinking domain of SecA"/>
    <property type="match status" value="1"/>
</dbReference>
<dbReference type="PROSITE" id="PS01312">
    <property type="entry name" value="SECA"/>
    <property type="match status" value="1"/>
</dbReference>
<dbReference type="PROSITE" id="PS51196">
    <property type="entry name" value="SECA_MOTOR_DEAD"/>
    <property type="match status" value="1"/>
</dbReference>
<proteinExistence type="inferred from homology"/>
<comment type="function">
    <text evidence="1">Part of the Sec protein translocase complex. Interacts with the SecYEG preprotein conducting channel. Has a central role in coupling the hydrolysis of ATP to the transfer of proteins into and across the cell membrane, serving as an ATP-driven molecular motor driving the stepwise translocation of polypeptide chains across the membrane.</text>
</comment>
<comment type="catalytic activity">
    <reaction evidence="1">
        <text>ATP + H2O + cellular proteinSide 1 = ADP + phosphate + cellular proteinSide 2.</text>
        <dbReference type="EC" id="7.4.2.8"/>
    </reaction>
</comment>
<comment type="cofactor">
    <cofactor evidence="1">
        <name>Zn(2+)</name>
        <dbReference type="ChEBI" id="CHEBI:29105"/>
    </cofactor>
    <text evidence="1">May bind 1 zinc ion per subunit.</text>
</comment>
<comment type="subunit">
    <text evidence="1">Monomer and homodimer. Part of the essential Sec protein translocation apparatus which comprises SecA, SecYEG and auxiliary proteins SecDF. Other proteins may also be involved.</text>
</comment>
<comment type="subcellular location">
    <subcellularLocation>
        <location evidence="1">Cell membrane</location>
        <topology evidence="1">Peripheral membrane protein</topology>
        <orientation evidence="1">Cytoplasmic side</orientation>
    </subcellularLocation>
    <subcellularLocation>
        <location evidence="1">Cytoplasm</location>
    </subcellularLocation>
    <text evidence="1">Distribution is 50-50.</text>
</comment>
<comment type="similarity">
    <text evidence="1">Belongs to the SecA family.</text>
</comment>
<keyword id="KW-0067">ATP-binding</keyword>
<keyword id="KW-1003">Cell membrane</keyword>
<keyword id="KW-0963">Cytoplasm</keyword>
<keyword id="KW-0472">Membrane</keyword>
<keyword id="KW-0479">Metal-binding</keyword>
<keyword id="KW-0547">Nucleotide-binding</keyword>
<keyword id="KW-0653">Protein transport</keyword>
<keyword id="KW-1278">Translocase</keyword>
<keyword id="KW-0811">Translocation</keyword>
<keyword id="KW-0813">Transport</keyword>
<keyword id="KW-0862">Zinc</keyword>
<name>SECA_LACLM</name>
<sequence>MPNIIRKLVENDKKELKKLNKMALQVESFADEMEHLTDEQLKAKTPELKERIAKGESLDDLLYEAFAVCREAARRVLGLYPFHVQIMGGIVLHNGDVPEMRTGEGKTLTATMPVYLNALSGKGVHVVTVNEYLATRDMTEMGELYSWLGLTVGLNLNSKSPEEKREAYNCDITYSTSAELGFDYLRDNMVTRAEDMVQKPLNYALVDEVDSILVDEARTPLIISGQAESSSALYYRADQFTKTLKGQNLNVATSDYEEGDDYKIDLQSKTISLTEEGIDKAEKFFQIENLYDMENVALTHFVDNALRANFIMLHDIDYMVDENQEVLIIDQFTGRTMPGRRYSDGLHQAIEAKEAVPIQDESKTMASITIQNYFRMYKKLSGMTGTAKTEEEEFREIYNIQITPIPTNRPVQRLDHPDLLYPTLEAKFKAVIDDIKRRHAEGQPILIGTVAVETSELISKKLVEAKIPHEVLNAKNHFREAQIIMNAGQQGAVTIATNMAGRGTDIKLGPGVIDHADPEFRGLAVIGTERHESRRIDNQLRGRSGRQGDPGVSQFYLSLEDELMKRFGSERVSAFLDRMRISGEDAVIKSGLITRQIESSQKRVEGNNYDSRKQVLQYDDVIREQREVIYAQRQEVILTKEDMTPVLMGMFKRTIDRQVDGHELAGNLKDEETVKDLLQTVQNTMLPEEAIELSELTGLSGQAMKDLIFDKVKSRYASQMEKLADPERQLEFQRAVILRVVDNNWSEHIDALDQMRQSVGLRGYAQNNPIVEYQEESYKMYNNMIGAIEFEVTRLMMKAQIQPQTAIRQEAPRMTTTASQENITNVGPDTSVSEEISFENVGRNDPCPCGSGKKFKNCHGRTHIA</sequence>
<gene>
    <name evidence="1" type="primary">secA</name>
    <name type="ordered locus">llmg_0124</name>
</gene>
<protein>
    <recommendedName>
        <fullName evidence="1">Protein translocase subunit SecA</fullName>
        <ecNumber evidence="1">7.4.2.8</ecNumber>
    </recommendedName>
</protein>
<organism>
    <name type="scientific">Lactococcus lactis subsp. cremoris (strain MG1363)</name>
    <dbReference type="NCBI Taxonomy" id="416870"/>
    <lineage>
        <taxon>Bacteria</taxon>
        <taxon>Bacillati</taxon>
        <taxon>Bacillota</taxon>
        <taxon>Bacilli</taxon>
        <taxon>Lactobacillales</taxon>
        <taxon>Streptococcaceae</taxon>
        <taxon>Lactococcus</taxon>
        <taxon>Lactococcus cremoris subsp. cremoris</taxon>
    </lineage>
</organism>
<accession>A2RHJ5</accession>
<feature type="chain" id="PRO_1000073481" description="Protein translocase subunit SecA">
    <location>
        <begin position="1"/>
        <end position="865"/>
    </location>
</feature>
<feature type="binding site" evidence="1">
    <location>
        <position position="85"/>
    </location>
    <ligand>
        <name>ATP</name>
        <dbReference type="ChEBI" id="CHEBI:30616"/>
    </ligand>
</feature>
<feature type="binding site" evidence="1">
    <location>
        <begin position="103"/>
        <end position="107"/>
    </location>
    <ligand>
        <name>ATP</name>
        <dbReference type="ChEBI" id="CHEBI:30616"/>
    </ligand>
</feature>
<feature type="binding site" evidence="1">
    <location>
        <position position="505"/>
    </location>
    <ligand>
        <name>ATP</name>
        <dbReference type="ChEBI" id="CHEBI:30616"/>
    </ligand>
</feature>
<feature type="binding site" evidence="1">
    <location>
        <position position="847"/>
    </location>
    <ligand>
        <name>Zn(2+)</name>
        <dbReference type="ChEBI" id="CHEBI:29105"/>
    </ligand>
</feature>
<feature type="binding site" evidence="1">
    <location>
        <position position="849"/>
    </location>
    <ligand>
        <name>Zn(2+)</name>
        <dbReference type="ChEBI" id="CHEBI:29105"/>
    </ligand>
</feature>
<feature type="binding site" evidence="1">
    <location>
        <position position="858"/>
    </location>
    <ligand>
        <name>Zn(2+)</name>
        <dbReference type="ChEBI" id="CHEBI:29105"/>
    </ligand>
</feature>
<feature type="binding site" evidence="1">
    <location>
        <position position="859"/>
    </location>
    <ligand>
        <name>Zn(2+)</name>
        <dbReference type="ChEBI" id="CHEBI:29105"/>
    </ligand>
</feature>
<evidence type="ECO:0000255" key="1">
    <source>
        <dbReference type="HAMAP-Rule" id="MF_01382"/>
    </source>
</evidence>